<organism>
    <name type="scientific">Schizosaccharomyces pombe (strain 972 / ATCC 24843)</name>
    <name type="common">Fission yeast</name>
    <dbReference type="NCBI Taxonomy" id="284812"/>
    <lineage>
        <taxon>Eukaryota</taxon>
        <taxon>Fungi</taxon>
        <taxon>Dikarya</taxon>
        <taxon>Ascomycota</taxon>
        <taxon>Taphrinomycotina</taxon>
        <taxon>Schizosaccharomycetes</taxon>
        <taxon>Schizosaccharomycetales</taxon>
        <taxon>Schizosaccharomycetaceae</taxon>
        <taxon>Schizosaccharomyces</taxon>
    </lineage>
</organism>
<feature type="chain" id="PRO_0000120332" description="E3 ubiquitin-protein ligase pub1">
    <location>
        <begin position="1"/>
        <end position="767"/>
    </location>
</feature>
<feature type="domain" description="C2" evidence="1">
    <location>
        <begin position="1"/>
        <end position="111"/>
    </location>
</feature>
<feature type="domain" description="WW 1" evidence="3">
    <location>
        <begin position="211"/>
        <end position="236"/>
    </location>
</feature>
<feature type="domain" description="WW 2" evidence="3">
    <location>
        <begin position="294"/>
        <end position="319"/>
    </location>
</feature>
<feature type="domain" description="WW 3" evidence="3">
    <location>
        <begin position="351"/>
        <end position="376"/>
    </location>
</feature>
<feature type="domain" description="HECT" evidence="2">
    <location>
        <begin position="463"/>
        <end position="767"/>
    </location>
</feature>
<feature type="region of interest" description="Disordered" evidence="4">
    <location>
        <begin position="138"/>
        <end position="216"/>
    </location>
</feature>
<feature type="region of interest" description="Disordered" evidence="4">
    <location>
        <begin position="252"/>
        <end position="306"/>
    </location>
</feature>
<feature type="compositionally biased region" description="Polar residues" evidence="4">
    <location>
        <begin position="138"/>
        <end position="158"/>
    </location>
</feature>
<feature type="compositionally biased region" description="Low complexity" evidence="4">
    <location>
        <begin position="159"/>
        <end position="176"/>
    </location>
</feature>
<feature type="compositionally biased region" description="Low complexity" evidence="4">
    <location>
        <begin position="184"/>
        <end position="194"/>
    </location>
</feature>
<feature type="compositionally biased region" description="Polar residues" evidence="4">
    <location>
        <begin position="257"/>
        <end position="286"/>
    </location>
</feature>
<feature type="active site" description="Glycyl thioester intermediate" evidence="2">
    <location>
        <position position="735"/>
    </location>
</feature>
<feature type="modified residue" description="Phosphothreonine" evidence="6">
    <location>
        <position position="156"/>
    </location>
</feature>
<feature type="modified residue" description="Phosphoserine" evidence="6">
    <location>
        <position position="178"/>
    </location>
</feature>
<feature type="modified residue" description="Phosphothreonine" evidence="6">
    <location>
        <position position="180"/>
    </location>
</feature>
<feature type="sequence conflict" description="In Ref. 1; CAA68867/AAB07514." evidence="7" ref="1">
    <original>Q</original>
    <variation>K</variation>
    <location>
        <position position="163"/>
    </location>
</feature>
<feature type="sequence conflict" description="In Ref. 1; CAA68867/AAB07514." evidence="7" ref="1">
    <location>
        <position position="609"/>
    </location>
</feature>
<feature type="sequence conflict" description="In Ref. 1; CAA68867/AAB07514." evidence="7" ref="1">
    <original>T</original>
    <variation>K</variation>
    <location>
        <position position="661"/>
    </location>
</feature>
<comment type="function">
    <text>E3 ubiquitin-protein ligase which accepts ubiquitin from an E2 ubiquitin-conjugating enzyme in the form of a thioester and then directly transfers the ubiquitin to targeted substrates. Regulates ubiquitination of cdc25.</text>
</comment>
<comment type="catalytic activity">
    <reaction>
        <text>S-ubiquitinyl-[E2 ubiquitin-conjugating enzyme]-L-cysteine + [acceptor protein]-L-lysine = [E2 ubiquitin-conjugating enzyme]-L-cysteine + N(6)-ubiquitinyl-[acceptor protein]-L-lysine.</text>
        <dbReference type="EC" id="2.3.2.26"/>
    </reaction>
</comment>
<comment type="pathway">
    <text>Protein modification; protein ubiquitination.</text>
</comment>
<comment type="subcellular location">
    <subcellularLocation>
        <location evidence="5">Membrane</location>
        <topology evidence="5">Peripheral membrane protein</topology>
    </subcellularLocation>
    <subcellularLocation>
        <location evidence="5">Cytoplasm</location>
    </subcellularLocation>
</comment>
<comment type="miscellaneous">
    <text>A cysteine residue is required for ubiquitin-thioester formation.</text>
</comment>
<proteinExistence type="evidence at protein level"/>
<gene>
    <name type="primary">pub1</name>
    <name type="ORF">SPAC11G7.02</name>
</gene>
<sequence length="767" mass="87268">MSNSAQSRRIRVTIVAADGLYKRDVFRFPDPFAVLTVDGEQTHTTTAIKKTLNPYWNETFEVNVTDNSTIAIQVFDQKKFKKKGQGFLGVINLRVGDVLDLAIGGDEMLTRDLKKSNENTVVHGKIIINLSTTAQSTLQVPSSAASGARTQRTSITNDPQSSQSSSVSRNPASSRAGSPTRDNAPAASPASSEPRTFSSFEDQYGRLPPGWERRTDNLGRTYYVDHNTRSTTWIRPNLSSVAGAAAAELHSSASSANVTEGVQPSSSNAARRTEASVLTSNATTAGSGELPPGWEQRYTPEGRPYFVDHNTRTTTWVDPRRQQYIRSYGGPNNATIQQQPVSQLGPLPSGWEMRLTNTARVYFVDHNTKTTTWDDPRLPSSLDQNVPQYKRDFRRKLIYFLSQPALHPLPGQCHIKVRRNHIFEDSYAEIMRQSATDLKKRLMIKFDGEDGLDYGGLSREYFFLLSHEMFNPFYCLFEYSSVDNYTLQINPHSGINPEHLNYFKFIGRVIGLAIFHRRFVDAFFVVSFYKMILQKKVTLQDMESMDAEYYRSLVWILDNDITGVLDLTFSVEDNCFGEVVTIDLKPNGRNIEVTEENKREYVDLVTVWRIQKRIEEQFNAFHEGFSELIPQELINVFDERELELLIGGISEIDMEDWKKHTDYRSYSENDQIIKWFWELMDEWSNEKKSRLLQFTTGTSRIPVNGFKDLQGSDGPRKFTIEKAGEPNKLPKAHTCFNRLDLPPYTSKKDLDHKLSIAVEETIGFGQE</sequence>
<reference key="1">
    <citation type="journal article" date="1996" name="EMBO J.">
        <title>Pub1 acts as an E6-AP-like protein ubiquitiin ligase in the degradation of cdc25.</title>
        <authorList>
            <person name="Nefsky B."/>
            <person name="Beach D."/>
        </authorList>
    </citation>
    <scope>NUCLEOTIDE SEQUENCE [GENOMIC DNA / MRNA]</scope>
</reference>
<reference key="2">
    <citation type="journal article" date="1997" name="Mol. Gen. Genet.">
        <title>Tolerance of low pH in Schizosaccharomyces pombe requires a functioning pub1 ubiquitin ligase.</title>
        <authorList>
            <person name="Saleki R."/>
            <person name="Jia Z."/>
            <person name="Karagiannis J."/>
            <person name="Young P.G."/>
        </authorList>
    </citation>
    <scope>NUCLEOTIDE SEQUENCE [GENOMIC DNA]</scope>
    <source>
        <strain>J227</strain>
    </source>
</reference>
<reference key="3">
    <citation type="journal article" date="2002" name="Nature">
        <title>The genome sequence of Schizosaccharomyces pombe.</title>
        <authorList>
            <person name="Wood V."/>
            <person name="Gwilliam R."/>
            <person name="Rajandream M.A."/>
            <person name="Lyne M.H."/>
            <person name="Lyne R."/>
            <person name="Stewart A."/>
            <person name="Sgouros J.G."/>
            <person name="Peat N."/>
            <person name="Hayles J."/>
            <person name="Baker S.G."/>
            <person name="Basham D."/>
            <person name="Bowman S."/>
            <person name="Brooks K."/>
            <person name="Brown D."/>
            <person name="Brown S."/>
            <person name="Chillingworth T."/>
            <person name="Churcher C.M."/>
            <person name="Collins M."/>
            <person name="Connor R."/>
            <person name="Cronin A."/>
            <person name="Davis P."/>
            <person name="Feltwell T."/>
            <person name="Fraser A."/>
            <person name="Gentles S."/>
            <person name="Goble A."/>
            <person name="Hamlin N."/>
            <person name="Harris D.E."/>
            <person name="Hidalgo J."/>
            <person name="Hodgson G."/>
            <person name="Holroyd S."/>
            <person name="Hornsby T."/>
            <person name="Howarth S."/>
            <person name="Huckle E.J."/>
            <person name="Hunt S."/>
            <person name="Jagels K."/>
            <person name="James K.D."/>
            <person name="Jones L."/>
            <person name="Jones M."/>
            <person name="Leather S."/>
            <person name="McDonald S."/>
            <person name="McLean J."/>
            <person name="Mooney P."/>
            <person name="Moule S."/>
            <person name="Mungall K.L."/>
            <person name="Murphy L.D."/>
            <person name="Niblett D."/>
            <person name="Odell C."/>
            <person name="Oliver K."/>
            <person name="O'Neil S."/>
            <person name="Pearson D."/>
            <person name="Quail M.A."/>
            <person name="Rabbinowitsch E."/>
            <person name="Rutherford K.M."/>
            <person name="Rutter S."/>
            <person name="Saunders D."/>
            <person name="Seeger K."/>
            <person name="Sharp S."/>
            <person name="Skelton J."/>
            <person name="Simmonds M.N."/>
            <person name="Squares R."/>
            <person name="Squares S."/>
            <person name="Stevens K."/>
            <person name="Taylor K."/>
            <person name="Taylor R.G."/>
            <person name="Tivey A."/>
            <person name="Walsh S.V."/>
            <person name="Warren T."/>
            <person name="Whitehead S."/>
            <person name="Woodward J.R."/>
            <person name="Volckaert G."/>
            <person name="Aert R."/>
            <person name="Robben J."/>
            <person name="Grymonprez B."/>
            <person name="Weltjens I."/>
            <person name="Vanstreels E."/>
            <person name="Rieger M."/>
            <person name="Schaefer M."/>
            <person name="Mueller-Auer S."/>
            <person name="Gabel C."/>
            <person name="Fuchs M."/>
            <person name="Duesterhoeft A."/>
            <person name="Fritzc C."/>
            <person name="Holzer E."/>
            <person name="Moestl D."/>
            <person name="Hilbert H."/>
            <person name="Borzym K."/>
            <person name="Langer I."/>
            <person name="Beck A."/>
            <person name="Lehrach H."/>
            <person name="Reinhardt R."/>
            <person name="Pohl T.M."/>
            <person name="Eger P."/>
            <person name="Zimmermann W."/>
            <person name="Wedler H."/>
            <person name="Wambutt R."/>
            <person name="Purnelle B."/>
            <person name="Goffeau A."/>
            <person name="Cadieu E."/>
            <person name="Dreano S."/>
            <person name="Gloux S."/>
            <person name="Lelaure V."/>
            <person name="Mottier S."/>
            <person name="Galibert F."/>
            <person name="Aves S.J."/>
            <person name="Xiang Z."/>
            <person name="Hunt C."/>
            <person name="Moore K."/>
            <person name="Hurst S.M."/>
            <person name="Lucas M."/>
            <person name="Rochet M."/>
            <person name="Gaillardin C."/>
            <person name="Tallada V.A."/>
            <person name="Garzon A."/>
            <person name="Thode G."/>
            <person name="Daga R.R."/>
            <person name="Cruzado L."/>
            <person name="Jimenez J."/>
            <person name="Sanchez M."/>
            <person name="del Rey F."/>
            <person name="Benito J."/>
            <person name="Dominguez A."/>
            <person name="Revuelta J.L."/>
            <person name="Moreno S."/>
            <person name="Armstrong J."/>
            <person name="Forsburg S.L."/>
            <person name="Cerutti L."/>
            <person name="Lowe T."/>
            <person name="McCombie W.R."/>
            <person name="Paulsen I."/>
            <person name="Potashkin J."/>
            <person name="Shpakovski G.V."/>
            <person name="Ussery D."/>
            <person name="Barrell B.G."/>
            <person name="Nurse P."/>
        </authorList>
    </citation>
    <scope>NUCLEOTIDE SEQUENCE [LARGE SCALE GENOMIC DNA]</scope>
    <source>
        <strain>972 / ATCC 24843</strain>
    </source>
</reference>
<reference key="4">
    <citation type="journal article" date="2002" name="J. Cell Sci.">
        <title>The novel HECT-type ubiquitin-protein ligase Pub2p shares partially overlapping function with Pub1p in Schizosaccharomyces pombe.</title>
        <authorList>
            <person name="Tamai K.K."/>
            <person name="Shimoda C."/>
        </authorList>
    </citation>
    <scope>SUBCELLULAR LOCATION</scope>
</reference>
<reference key="5">
    <citation type="journal article" date="2008" name="J. Proteome Res.">
        <title>Phosphoproteome analysis of fission yeast.</title>
        <authorList>
            <person name="Wilson-Grady J.T."/>
            <person name="Villen J."/>
            <person name="Gygi S.P."/>
        </authorList>
    </citation>
    <scope>PHOSPHORYLATION [LARGE SCALE ANALYSIS] AT THR-156; SER-178 AND THR-180</scope>
    <scope>IDENTIFICATION BY MASS SPECTROMETRY</scope>
</reference>
<keyword id="KW-0963">Cytoplasm</keyword>
<keyword id="KW-0472">Membrane</keyword>
<keyword id="KW-0597">Phosphoprotein</keyword>
<keyword id="KW-1185">Reference proteome</keyword>
<keyword id="KW-0677">Repeat</keyword>
<keyword id="KW-0808">Transferase</keyword>
<keyword id="KW-0833">Ubl conjugation pathway</keyword>
<dbReference type="EC" id="2.3.2.26"/>
<dbReference type="EMBL" id="Y07592">
    <property type="protein sequence ID" value="CAA68867.1"/>
    <property type="molecule type" value="mRNA"/>
</dbReference>
<dbReference type="EMBL" id="U66716">
    <property type="protein sequence ID" value="AAB07514.1"/>
    <property type="molecule type" value="mRNA"/>
</dbReference>
<dbReference type="EMBL" id="CU329670">
    <property type="protein sequence ID" value="CAB16207.1"/>
    <property type="molecule type" value="Genomic_DNA"/>
</dbReference>
<dbReference type="EMBL" id="U62795">
    <property type="protein sequence ID" value="AAB63350.1"/>
    <property type="molecule type" value="Genomic_DNA"/>
</dbReference>
<dbReference type="PIR" id="S66562">
    <property type="entry name" value="S66562"/>
</dbReference>
<dbReference type="PIR" id="T37545">
    <property type="entry name" value="T37545"/>
</dbReference>
<dbReference type="RefSeq" id="NP_594396.1">
    <property type="nucleotide sequence ID" value="NM_001019819.2"/>
</dbReference>
<dbReference type="SMR" id="Q92462"/>
<dbReference type="BioGRID" id="278309">
    <property type="interactions" value="76"/>
</dbReference>
<dbReference type="FunCoup" id="Q92462">
    <property type="interactions" value="590"/>
</dbReference>
<dbReference type="STRING" id="284812.Q92462"/>
<dbReference type="iPTMnet" id="Q92462"/>
<dbReference type="PaxDb" id="4896-SPAC11G7.02.1"/>
<dbReference type="EnsemblFungi" id="SPAC11G7.02.1">
    <property type="protein sequence ID" value="SPAC11G7.02.1:pep"/>
    <property type="gene ID" value="SPAC11G7.02"/>
</dbReference>
<dbReference type="GeneID" id="2541818"/>
<dbReference type="KEGG" id="spo:2541818"/>
<dbReference type="PomBase" id="SPAC11G7.02">
    <property type="gene designation" value="pub1"/>
</dbReference>
<dbReference type="VEuPathDB" id="FungiDB:SPAC11G7.02"/>
<dbReference type="eggNOG" id="KOG0940">
    <property type="taxonomic scope" value="Eukaryota"/>
</dbReference>
<dbReference type="HOGENOM" id="CLU_002173_0_0_1"/>
<dbReference type="InParanoid" id="Q92462"/>
<dbReference type="OMA" id="WKRPTLD"/>
<dbReference type="PhylomeDB" id="Q92462"/>
<dbReference type="Reactome" id="R-SPO-8948747">
    <property type="pathway name" value="Regulation of PTEN localization"/>
</dbReference>
<dbReference type="Reactome" id="R-SPO-8948751">
    <property type="pathway name" value="Regulation of PTEN stability and activity"/>
</dbReference>
<dbReference type="Reactome" id="R-SPO-9013406">
    <property type="pathway name" value="RHOQ GTPase cycle"/>
</dbReference>
<dbReference type="Reactome" id="R-SPO-9013420">
    <property type="pathway name" value="RHOU GTPase cycle"/>
</dbReference>
<dbReference type="Reactome" id="R-SPO-983168">
    <property type="pathway name" value="Antigen processing: Ubiquitination &amp; Proteasome degradation"/>
</dbReference>
<dbReference type="UniPathway" id="UPA00143"/>
<dbReference type="PRO" id="PR:Q92462"/>
<dbReference type="Proteomes" id="UP000002485">
    <property type="component" value="Chromosome I"/>
</dbReference>
<dbReference type="GO" id="GO:0071944">
    <property type="term" value="C:cell periphery"/>
    <property type="evidence" value="ECO:0000314"/>
    <property type="project" value="PomBase"/>
</dbReference>
<dbReference type="GO" id="GO:0005737">
    <property type="term" value="C:cytoplasm"/>
    <property type="evidence" value="ECO:0000314"/>
    <property type="project" value="PomBase"/>
</dbReference>
<dbReference type="GO" id="GO:0005794">
    <property type="term" value="C:Golgi apparatus"/>
    <property type="evidence" value="ECO:0007005"/>
    <property type="project" value="PomBase"/>
</dbReference>
<dbReference type="GO" id="GO:0016020">
    <property type="term" value="C:membrane"/>
    <property type="evidence" value="ECO:0007669"/>
    <property type="project" value="UniProtKB-SubCell"/>
</dbReference>
<dbReference type="GO" id="GO:0005543">
    <property type="term" value="F:phospholipid binding"/>
    <property type="evidence" value="ECO:0000255"/>
    <property type="project" value="PomBase"/>
</dbReference>
<dbReference type="GO" id="GO:0061630">
    <property type="term" value="F:ubiquitin protein ligase activity"/>
    <property type="evidence" value="ECO:0000314"/>
    <property type="project" value="PomBase"/>
</dbReference>
<dbReference type="GO" id="GO:0120113">
    <property type="term" value="P:cytoplasm to vacuole targeting by the NVT pathway"/>
    <property type="evidence" value="ECO:0000315"/>
    <property type="project" value="PomBase"/>
</dbReference>
<dbReference type="GO" id="GO:0042997">
    <property type="term" value="P:negative regulation of Golgi to plasma membrane protein transport"/>
    <property type="evidence" value="ECO:0000315"/>
    <property type="project" value="PomBase"/>
</dbReference>
<dbReference type="GO" id="GO:1905533">
    <property type="term" value="P:negative regulation of L-leucine import across plasma membrane"/>
    <property type="evidence" value="ECO:0000315"/>
    <property type="project" value="PomBase"/>
</dbReference>
<dbReference type="GO" id="GO:1905530">
    <property type="term" value="P:negative regulation of uracil import across plasma membrane"/>
    <property type="evidence" value="ECO:0000315"/>
    <property type="project" value="PomBase"/>
</dbReference>
<dbReference type="GO" id="GO:0016567">
    <property type="term" value="P:protein ubiquitination"/>
    <property type="evidence" value="ECO:0007669"/>
    <property type="project" value="UniProtKB-UniPathway"/>
</dbReference>
<dbReference type="GO" id="GO:0006511">
    <property type="term" value="P:ubiquitin-dependent protein catabolic process"/>
    <property type="evidence" value="ECO:0000318"/>
    <property type="project" value="GO_Central"/>
</dbReference>
<dbReference type="CDD" id="cd08382">
    <property type="entry name" value="C2_Smurf-like"/>
    <property type="match status" value="1"/>
</dbReference>
<dbReference type="CDD" id="cd00078">
    <property type="entry name" value="HECTc"/>
    <property type="match status" value="1"/>
</dbReference>
<dbReference type="CDD" id="cd00201">
    <property type="entry name" value="WW"/>
    <property type="match status" value="3"/>
</dbReference>
<dbReference type="FunFam" id="2.20.70.10:FF:000011">
    <property type="entry name" value="E3 ubiquitin-protein ligase"/>
    <property type="match status" value="1"/>
</dbReference>
<dbReference type="FunFam" id="2.20.70.10:FF:000017">
    <property type="entry name" value="E3 ubiquitin-protein ligase"/>
    <property type="match status" value="1"/>
</dbReference>
<dbReference type="FunFam" id="2.60.40.150:FF:000074">
    <property type="entry name" value="E3 ubiquitin-protein ligase"/>
    <property type="match status" value="1"/>
</dbReference>
<dbReference type="FunFam" id="3.90.1750.10:FF:000005">
    <property type="entry name" value="E3 ubiquitin-protein ligase"/>
    <property type="match status" value="1"/>
</dbReference>
<dbReference type="FunFam" id="3.30.2160.10:FF:000001">
    <property type="entry name" value="E3 ubiquitin-protein ligase NEDD4-like"/>
    <property type="match status" value="1"/>
</dbReference>
<dbReference type="FunFam" id="3.30.2410.10:FF:000001">
    <property type="entry name" value="E3 ubiquitin-protein ligase NEDD4-like"/>
    <property type="match status" value="1"/>
</dbReference>
<dbReference type="Gene3D" id="2.20.70.10">
    <property type="match status" value="2"/>
</dbReference>
<dbReference type="Gene3D" id="2.60.40.150">
    <property type="entry name" value="C2 domain"/>
    <property type="match status" value="1"/>
</dbReference>
<dbReference type="Gene3D" id="3.30.2160.10">
    <property type="entry name" value="Hect, E3 ligase catalytic domain"/>
    <property type="match status" value="1"/>
</dbReference>
<dbReference type="Gene3D" id="3.30.2410.10">
    <property type="entry name" value="Hect, E3 ligase catalytic domain"/>
    <property type="match status" value="1"/>
</dbReference>
<dbReference type="Gene3D" id="3.90.1750.10">
    <property type="entry name" value="Hect, E3 ligase catalytic domains"/>
    <property type="match status" value="1"/>
</dbReference>
<dbReference type="InterPro" id="IPR000008">
    <property type="entry name" value="C2_dom"/>
</dbReference>
<dbReference type="InterPro" id="IPR035892">
    <property type="entry name" value="C2_domain_sf"/>
</dbReference>
<dbReference type="InterPro" id="IPR024928">
    <property type="entry name" value="E3_ub_ligase_SMURF1"/>
</dbReference>
<dbReference type="InterPro" id="IPR050409">
    <property type="entry name" value="E3_ubiq-protein_ligase"/>
</dbReference>
<dbReference type="InterPro" id="IPR000569">
    <property type="entry name" value="HECT_dom"/>
</dbReference>
<dbReference type="InterPro" id="IPR035983">
    <property type="entry name" value="Hect_E3_ubiquitin_ligase"/>
</dbReference>
<dbReference type="InterPro" id="IPR001202">
    <property type="entry name" value="WW_dom"/>
</dbReference>
<dbReference type="InterPro" id="IPR036020">
    <property type="entry name" value="WW_dom_sf"/>
</dbReference>
<dbReference type="PANTHER" id="PTHR11254:SF440">
    <property type="entry name" value="E3 UBIQUITIN-PROTEIN LIGASE NEDD-4"/>
    <property type="match status" value="1"/>
</dbReference>
<dbReference type="PANTHER" id="PTHR11254">
    <property type="entry name" value="HECT DOMAIN UBIQUITIN-PROTEIN LIGASE"/>
    <property type="match status" value="1"/>
</dbReference>
<dbReference type="Pfam" id="PF00168">
    <property type="entry name" value="C2"/>
    <property type="match status" value="1"/>
</dbReference>
<dbReference type="Pfam" id="PF00632">
    <property type="entry name" value="HECT"/>
    <property type="match status" value="1"/>
</dbReference>
<dbReference type="Pfam" id="PF00397">
    <property type="entry name" value="WW"/>
    <property type="match status" value="3"/>
</dbReference>
<dbReference type="PIRSF" id="PIRSF001569">
    <property type="entry name" value="E3_ub_ligase_SMURF1"/>
    <property type="match status" value="1"/>
</dbReference>
<dbReference type="SMART" id="SM00239">
    <property type="entry name" value="C2"/>
    <property type="match status" value="1"/>
</dbReference>
<dbReference type="SMART" id="SM00119">
    <property type="entry name" value="HECTc"/>
    <property type="match status" value="1"/>
</dbReference>
<dbReference type="SMART" id="SM00456">
    <property type="entry name" value="WW"/>
    <property type="match status" value="3"/>
</dbReference>
<dbReference type="SUPFAM" id="SSF49562">
    <property type="entry name" value="C2 domain (Calcium/lipid-binding domain, CaLB)"/>
    <property type="match status" value="1"/>
</dbReference>
<dbReference type="SUPFAM" id="SSF56204">
    <property type="entry name" value="Hect, E3 ligase catalytic domain"/>
    <property type="match status" value="1"/>
</dbReference>
<dbReference type="SUPFAM" id="SSF51045">
    <property type="entry name" value="WW domain"/>
    <property type="match status" value="3"/>
</dbReference>
<dbReference type="PROSITE" id="PS50004">
    <property type="entry name" value="C2"/>
    <property type="match status" value="1"/>
</dbReference>
<dbReference type="PROSITE" id="PS50237">
    <property type="entry name" value="HECT"/>
    <property type="match status" value="1"/>
</dbReference>
<dbReference type="PROSITE" id="PS01159">
    <property type="entry name" value="WW_DOMAIN_1"/>
    <property type="match status" value="3"/>
</dbReference>
<dbReference type="PROSITE" id="PS50020">
    <property type="entry name" value="WW_DOMAIN_2"/>
    <property type="match status" value="3"/>
</dbReference>
<accession>Q92462</accession>
<accession>O14454</accession>
<evidence type="ECO:0000255" key="1">
    <source>
        <dbReference type="PROSITE-ProRule" id="PRU00041"/>
    </source>
</evidence>
<evidence type="ECO:0000255" key="2">
    <source>
        <dbReference type="PROSITE-ProRule" id="PRU00104"/>
    </source>
</evidence>
<evidence type="ECO:0000255" key="3">
    <source>
        <dbReference type="PROSITE-ProRule" id="PRU00224"/>
    </source>
</evidence>
<evidence type="ECO:0000256" key="4">
    <source>
        <dbReference type="SAM" id="MobiDB-lite"/>
    </source>
</evidence>
<evidence type="ECO:0000269" key="5">
    <source>
    </source>
</evidence>
<evidence type="ECO:0000269" key="6">
    <source>
    </source>
</evidence>
<evidence type="ECO:0000305" key="7"/>
<protein>
    <recommendedName>
        <fullName>E3 ubiquitin-protein ligase pub1</fullName>
        <ecNumber>2.3.2.26</ecNumber>
    </recommendedName>
    <alternativeName>
        <fullName>HECT-type E3 ubiquitin transferase pub1</fullName>
    </alternativeName>
</protein>
<name>PUB1_SCHPO</name>